<gene>
    <name evidence="1" type="primary">rpoY</name>
    <name type="ordered locus">lwe1012</name>
</gene>
<feature type="chain" id="PRO_1000068875" description="DNA-directed RNA polymerase subunit epsilon">
    <location>
        <begin position="1"/>
        <end position="69"/>
    </location>
</feature>
<proteinExistence type="inferred from homology"/>
<accession>A0AHE8</accession>
<reference key="1">
    <citation type="journal article" date="2006" name="J. Bacteriol.">
        <title>Whole-genome sequence of Listeria welshimeri reveals common steps in genome reduction with Listeria innocua as compared to Listeria monocytogenes.</title>
        <authorList>
            <person name="Hain T."/>
            <person name="Steinweg C."/>
            <person name="Kuenne C.T."/>
            <person name="Billion A."/>
            <person name="Ghai R."/>
            <person name="Chatterjee S.S."/>
            <person name="Domann E."/>
            <person name="Kaerst U."/>
            <person name="Goesmann A."/>
            <person name="Bekel T."/>
            <person name="Bartels D."/>
            <person name="Kaiser O."/>
            <person name="Meyer F."/>
            <person name="Puehler A."/>
            <person name="Weisshaar B."/>
            <person name="Wehland J."/>
            <person name="Liang C."/>
            <person name="Dandekar T."/>
            <person name="Lampidis R."/>
            <person name="Kreft J."/>
            <person name="Goebel W."/>
            <person name="Chakraborty T."/>
        </authorList>
    </citation>
    <scope>NUCLEOTIDE SEQUENCE [LARGE SCALE GENOMIC DNA]</scope>
    <source>
        <strain>ATCC 35897 / DSM 20650 / CCUG 15529 / CIP 8149 / NCTC 11857 / SLCC 5334 / V8</strain>
    </source>
</reference>
<evidence type="ECO:0000255" key="1">
    <source>
        <dbReference type="HAMAP-Rule" id="MF_01553"/>
    </source>
</evidence>
<name>RPOY_LISW6</name>
<keyword id="KW-0240">DNA-directed RNA polymerase</keyword>
<keyword id="KW-0548">Nucleotidyltransferase</keyword>
<keyword id="KW-0804">Transcription</keyword>
<keyword id="KW-0808">Transferase</keyword>
<sequence length="69" mass="8319">MIFKVFYQETLKETPVREKTQSLYVEAESEVKVRQLLKDEPFHIEFVEKISDAHLAYEKENPDFALWEK</sequence>
<comment type="function">
    <text evidence="1">A non-essential component of RNA polymerase (RNAP).</text>
</comment>
<comment type="catalytic activity">
    <reaction evidence="1">
        <text>RNA(n) + a ribonucleoside 5'-triphosphate = RNA(n+1) + diphosphate</text>
        <dbReference type="Rhea" id="RHEA:21248"/>
        <dbReference type="Rhea" id="RHEA-COMP:14527"/>
        <dbReference type="Rhea" id="RHEA-COMP:17342"/>
        <dbReference type="ChEBI" id="CHEBI:33019"/>
        <dbReference type="ChEBI" id="CHEBI:61557"/>
        <dbReference type="ChEBI" id="CHEBI:140395"/>
        <dbReference type="EC" id="2.7.7.6"/>
    </reaction>
</comment>
<comment type="subunit">
    <text evidence="1">RNAP is composed of a core of 2 alpha, a beta and a beta' subunit. The core is associated with a delta subunit, and at least one of epsilon or omega. When a sigma factor is associated with the core the holoenzyme is formed, which can initiate transcription.</text>
</comment>
<comment type="similarity">
    <text evidence="1">Belongs to the RNA polymerase subunit epsilon family.</text>
</comment>
<dbReference type="EC" id="2.7.7.6" evidence="1"/>
<dbReference type="EMBL" id="AM263198">
    <property type="protein sequence ID" value="CAK20430.1"/>
    <property type="molecule type" value="Genomic_DNA"/>
</dbReference>
<dbReference type="RefSeq" id="WP_011701837.1">
    <property type="nucleotide sequence ID" value="NC_008555.1"/>
</dbReference>
<dbReference type="SMR" id="A0AHE8"/>
<dbReference type="STRING" id="386043.lwe1012"/>
<dbReference type="GeneID" id="61188902"/>
<dbReference type="KEGG" id="lwe:lwe1012"/>
<dbReference type="eggNOG" id="COG5503">
    <property type="taxonomic scope" value="Bacteria"/>
</dbReference>
<dbReference type="HOGENOM" id="CLU_187518_0_0_9"/>
<dbReference type="OrthoDB" id="2147503at2"/>
<dbReference type="Proteomes" id="UP000000779">
    <property type="component" value="Chromosome"/>
</dbReference>
<dbReference type="GO" id="GO:0000428">
    <property type="term" value="C:DNA-directed RNA polymerase complex"/>
    <property type="evidence" value="ECO:0007669"/>
    <property type="project" value="UniProtKB-KW"/>
</dbReference>
<dbReference type="GO" id="GO:0003677">
    <property type="term" value="F:DNA binding"/>
    <property type="evidence" value="ECO:0007669"/>
    <property type="project" value="UniProtKB-UniRule"/>
</dbReference>
<dbReference type="GO" id="GO:0003899">
    <property type="term" value="F:DNA-directed RNA polymerase activity"/>
    <property type="evidence" value="ECO:0007669"/>
    <property type="project" value="UniProtKB-UniRule"/>
</dbReference>
<dbReference type="GO" id="GO:0006351">
    <property type="term" value="P:DNA-templated transcription"/>
    <property type="evidence" value="ECO:0007669"/>
    <property type="project" value="UniProtKB-UniRule"/>
</dbReference>
<dbReference type="Gene3D" id="3.10.20.730">
    <property type="entry name" value="RNAP, epsilon subunit-like"/>
    <property type="match status" value="1"/>
</dbReference>
<dbReference type="HAMAP" id="MF_01553">
    <property type="entry name" value="RNApol_bact_RpoY"/>
    <property type="match status" value="1"/>
</dbReference>
<dbReference type="InterPro" id="IPR009907">
    <property type="entry name" value="RpoY"/>
</dbReference>
<dbReference type="NCBIfam" id="NF010188">
    <property type="entry name" value="PRK13667.1"/>
    <property type="match status" value="1"/>
</dbReference>
<dbReference type="Pfam" id="PF07288">
    <property type="entry name" value="RpoY"/>
    <property type="match status" value="1"/>
</dbReference>
<organism>
    <name type="scientific">Listeria welshimeri serovar 6b (strain ATCC 35897 / DSM 20650 / CCUG 15529 / CIP 8149 / NCTC 11857 / SLCC 5334 / V8)</name>
    <dbReference type="NCBI Taxonomy" id="386043"/>
    <lineage>
        <taxon>Bacteria</taxon>
        <taxon>Bacillati</taxon>
        <taxon>Bacillota</taxon>
        <taxon>Bacilli</taxon>
        <taxon>Bacillales</taxon>
        <taxon>Listeriaceae</taxon>
        <taxon>Listeria</taxon>
    </lineage>
</organism>
<protein>
    <recommendedName>
        <fullName evidence="1">DNA-directed RNA polymerase subunit epsilon</fullName>
        <shortName evidence="1">RNAP epsilon subunit</shortName>
        <ecNumber evidence="1">2.7.7.6</ecNumber>
    </recommendedName>
    <alternativeName>
        <fullName evidence="1">RNA polymerase epsilon subunit</fullName>
    </alternativeName>
    <alternativeName>
        <fullName evidence="1">Transcriptase subunit epsilon</fullName>
    </alternativeName>
</protein>